<sequence>MSSYKYYDLIRKPIITEKTTALSEQNKYAFYVDKFAAKLTVKKAIEEIFKVKVKKVNILNVKGKNKRFKGIIGTQINRKKAIVTLEKDNNIDFAGGIK</sequence>
<proteinExistence type="inferred from homology"/>
<feature type="chain" id="PRO_1000068150" description="Large ribosomal subunit protein uL23">
    <location>
        <begin position="1"/>
        <end position="98"/>
    </location>
</feature>
<organism>
    <name type="scientific">Rickettsia canadensis (strain McKiel)</name>
    <dbReference type="NCBI Taxonomy" id="293613"/>
    <lineage>
        <taxon>Bacteria</taxon>
        <taxon>Pseudomonadati</taxon>
        <taxon>Pseudomonadota</taxon>
        <taxon>Alphaproteobacteria</taxon>
        <taxon>Rickettsiales</taxon>
        <taxon>Rickettsiaceae</taxon>
        <taxon>Rickettsieae</taxon>
        <taxon>Rickettsia</taxon>
        <taxon>belli group</taxon>
    </lineage>
</organism>
<accession>A8EZL4</accession>
<keyword id="KW-0687">Ribonucleoprotein</keyword>
<keyword id="KW-0689">Ribosomal protein</keyword>
<keyword id="KW-0694">RNA-binding</keyword>
<keyword id="KW-0699">rRNA-binding</keyword>
<name>RL23_RICCK</name>
<evidence type="ECO:0000255" key="1">
    <source>
        <dbReference type="HAMAP-Rule" id="MF_01369"/>
    </source>
</evidence>
<evidence type="ECO:0000305" key="2"/>
<protein>
    <recommendedName>
        <fullName evidence="1">Large ribosomal subunit protein uL23</fullName>
    </recommendedName>
    <alternativeName>
        <fullName evidence="2">50S ribosomal protein L23</fullName>
    </alternativeName>
</protein>
<comment type="function">
    <text evidence="1">One of the early assembly proteins it binds 23S rRNA. One of the proteins that surrounds the polypeptide exit tunnel on the outside of the ribosome. Forms the main docking site for trigger factor binding to the ribosome.</text>
</comment>
<comment type="subunit">
    <text evidence="1">Part of the 50S ribosomal subunit. Contacts protein L29, and trigger factor when it is bound to the ribosome.</text>
</comment>
<comment type="similarity">
    <text evidence="1">Belongs to the universal ribosomal protein uL23 family.</text>
</comment>
<dbReference type="EMBL" id="CP000409">
    <property type="protein sequence ID" value="ABV73797.1"/>
    <property type="molecule type" value="Genomic_DNA"/>
</dbReference>
<dbReference type="RefSeq" id="WP_012148992.1">
    <property type="nucleotide sequence ID" value="NC_009879.1"/>
</dbReference>
<dbReference type="SMR" id="A8EZL4"/>
<dbReference type="STRING" id="293613.A1E_04360"/>
<dbReference type="KEGG" id="rcm:A1E_04360"/>
<dbReference type="eggNOG" id="COG0089">
    <property type="taxonomic scope" value="Bacteria"/>
</dbReference>
<dbReference type="HOGENOM" id="CLU_037562_3_2_5"/>
<dbReference type="Proteomes" id="UP000007056">
    <property type="component" value="Chromosome"/>
</dbReference>
<dbReference type="GO" id="GO:1990904">
    <property type="term" value="C:ribonucleoprotein complex"/>
    <property type="evidence" value="ECO:0007669"/>
    <property type="project" value="UniProtKB-KW"/>
</dbReference>
<dbReference type="GO" id="GO:0005840">
    <property type="term" value="C:ribosome"/>
    <property type="evidence" value="ECO:0007669"/>
    <property type="project" value="UniProtKB-KW"/>
</dbReference>
<dbReference type="GO" id="GO:0019843">
    <property type="term" value="F:rRNA binding"/>
    <property type="evidence" value="ECO:0007669"/>
    <property type="project" value="UniProtKB-UniRule"/>
</dbReference>
<dbReference type="GO" id="GO:0003735">
    <property type="term" value="F:structural constituent of ribosome"/>
    <property type="evidence" value="ECO:0007669"/>
    <property type="project" value="InterPro"/>
</dbReference>
<dbReference type="GO" id="GO:0006412">
    <property type="term" value="P:translation"/>
    <property type="evidence" value="ECO:0007669"/>
    <property type="project" value="UniProtKB-UniRule"/>
</dbReference>
<dbReference type="FunFam" id="3.30.70.330:FF:000001">
    <property type="entry name" value="50S ribosomal protein L23"/>
    <property type="match status" value="1"/>
</dbReference>
<dbReference type="Gene3D" id="3.30.70.330">
    <property type="match status" value="1"/>
</dbReference>
<dbReference type="HAMAP" id="MF_01369_B">
    <property type="entry name" value="Ribosomal_uL23_B"/>
    <property type="match status" value="1"/>
</dbReference>
<dbReference type="InterPro" id="IPR012677">
    <property type="entry name" value="Nucleotide-bd_a/b_plait_sf"/>
</dbReference>
<dbReference type="InterPro" id="IPR013025">
    <property type="entry name" value="Ribosomal_uL23-like"/>
</dbReference>
<dbReference type="InterPro" id="IPR012678">
    <property type="entry name" value="Ribosomal_uL23/eL15/eS24_sf"/>
</dbReference>
<dbReference type="NCBIfam" id="NF004359">
    <property type="entry name" value="PRK05738.1-3"/>
    <property type="match status" value="1"/>
</dbReference>
<dbReference type="NCBIfam" id="NF004363">
    <property type="entry name" value="PRK05738.2-4"/>
    <property type="match status" value="1"/>
</dbReference>
<dbReference type="PANTHER" id="PTHR11620">
    <property type="entry name" value="60S RIBOSOMAL PROTEIN L23A"/>
    <property type="match status" value="1"/>
</dbReference>
<dbReference type="Pfam" id="PF00276">
    <property type="entry name" value="Ribosomal_L23"/>
    <property type="match status" value="1"/>
</dbReference>
<dbReference type="SUPFAM" id="SSF54189">
    <property type="entry name" value="Ribosomal proteins S24e, L23 and L15e"/>
    <property type="match status" value="1"/>
</dbReference>
<gene>
    <name evidence="1" type="primary">rplW</name>
    <name type="ordered locus">A1E_04360</name>
</gene>
<reference key="1">
    <citation type="submission" date="2007-09" db="EMBL/GenBank/DDBJ databases">
        <title>Complete genome sequence of Rickettsia canadensis.</title>
        <authorList>
            <person name="Madan A."/>
            <person name="Fahey J."/>
            <person name="Helton E."/>
            <person name="Ketteman M."/>
            <person name="Madan A."/>
            <person name="Rodrigues S."/>
            <person name="Sanchez A."/>
            <person name="Whiting M."/>
            <person name="Dasch G."/>
            <person name="Eremeeva M."/>
        </authorList>
    </citation>
    <scope>NUCLEOTIDE SEQUENCE [LARGE SCALE GENOMIC DNA]</scope>
    <source>
        <strain>McKiel</strain>
    </source>
</reference>